<organism>
    <name type="scientific">Mannheimia succiniciproducens (strain KCTC 0769BP / MBEL55E)</name>
    <dbReference type="NCBI Taxonomy" id="221988"/>
    <lineage>
        <taxon>Bacteria</taxon>
        <taxon>Pseudomonadati</taxon>
        <taxon>Pseudomonadota</taxon>
        <taxon>Gammaproteobacteria</taxon>
        <taxon>Pasteurellales</taxon>
        <taxon>Pasteurellaceae</taxon>
        <taxon>Basfia</taxon>
    </lineage>
</organism>
<feature type="chain" id="PRO_0000078631" description="Chaperone protein HscA homolog">
    <location>
        <begin position="1"/>
        <end position="616"/>
    </location>
</feature>
<keyword id="KW-0067">ATP-binding</keyword>
<keyword id="KW-0143">Chaperone</keyword>
<keyword id="KW-0547">Nucleotide-binding</keyword>
<proteinExistence type="inferred from homology"/>
<accession>Q65RT2</accession>
<dbReference type="EMBL" id="AE016827">
    <property type="protein sequence ID" value="AAU38328.1"/>
    <property type="molecule type" value="Genomic_DNA"/>
</dbReference>
<dbReference type="RefSeq" id="WP_011200889.1">
    <property type="nucleotide sequence ID" value="NC_006300.1"/>
</dbReference>
<dbReference type="SMR" id="Q65RT2"/>
<dbReference type="STRING" id="221988.MS1721"/>
<dbReference type="KEGG" id="msu:MS1721"/>
<dbReference type="eggNOG" id="COG0443">
    <property type="taxonomic scope" value="Bacteria"/>
</dbReference>
<dbReference type="HOGENOM" id="CLU_005965_2_1_6"/>
<dbReference type="OrthoDB" id="9766019at2"/>
<dbReference type="Proteomes" id="UP000000607">
    <property type="component" value="Chromosome"/>
</dbReference>
<dbReference type="GO" id="GO:0005524">
    <property type="term" value="F:ATP binding"/>
    <property type="evidence" value="ECO:0007669"/>
    <property type="project" value="UniProtKB-KW"/>
</dbReference>
<dbReference type="GO" id="GO:0016887">
    <property type="term" value="F:ATP hydrolysis activity"/>
    <property type="evidence" value="ECO:0007669"/>
    <property type="project" value="UniProtKB-UniRule"/>
</dbReference>
<dbReference type="GO" id="GO:0140662">
    <property type="term" value="F:ATP-dependent protein folding chaperone"/>
    <property type="evidence" value="ECO:0007669"/>
    <property type="project" value="InterPro"/>
</dbReference>
<dbReference type="GO" id="GO:0051082">
    <property type="term" value="F:unfolded protein binding"/>
    <property type="evidence" value="ECO:0007669"/>
    <property type="project" value="InterPro"/>
</dbReference>
<dbReference type="GO" id="GO:0016226">
    <property type="term" value="P:iron-sulfur cluster assembly"/>
    <property type="evidence" value="ECO:0007669"/>
    <property type="project" value="InterPro"/>
</dbReference>
<dbReference type="CDD" id="cd10236">
    <property type="entry name" value="ASKHA_NBD_HSP70_HscA"/>
    <property type="match status" value="1"/>
</dbReference>
<dbReference type="FunFam" id="3.30.420.40:FF:000046">
    <property type="entry name" value="Chaperone protein HscA"/>
    <property type="match status" value="1"/>
</dbReference>
<dbReference type="FunFam" id="2.60.34.10:FF:000005">
    <property type="entry name" value="Chaperone protein HscA homolog"/>
    <property type="match status" value="1"/>
</dbReference>
<dbReference type="FunFam" id="3.30.420.40:FF:000020">
    <property type="entry name" value="Chaperone protein HscA homolog"/>
    <property type="match status" value="1"/>
</dbReference>
<dbReference type="Gene3D" id="1.20.1270.10">
    <property type="match status" value="1"/>
</dbReference>
<dbReference type="Gene3D" id="3.30.420.40">
    <property type="match status" value="2"/>
</dbReference>
<dbReference type="Gene3D" id="3.90.640.10">
    <property type="entry name" value="Actin, Chain A, domain 4"/>
    <property type="match status" value="1"/>
</dbReference>
<dbReference type="Gene3D" id="2.60.34.10">
    <property type="entry name" value="Substrate Binding Domain Of DNAk, Chain A, domain 1"/>
    <property type="match status" value="1"/>
</dbReference>
<dbReference type="HAMAP" id="MF_00679">
    <property type="entry name" value="HscA"/>
    <property type="match status" value="1"/>
</dbReference>
<dbReference type="InterPro" id="IPR043129">
    <property type="entry name" value="ATPase_NBD"/>
</dbReference>
<dbReference type="InterPro" id="IPR018181">
    <property type="entry name" value="Heat_shock_70_CS"/>
</dbReference>
<dbReference type="InterPro" id="IPR042039">
    <property type="entry name" value="HscA_NBD"/>
</dbReference>
<dbReference type="InterPro" id="IPR029048">
    <property type="entry name" value="HSP70_C_sf"/>
</dbReference>
<dbReference type="InterPro" id="IPR029047">
    <property type="entry name" value="HSP70_peptide-bd_sf"/>
</dbReference>
<dbReference type="InterPro" id="IPR013126">
    <property type="entry name" value="Hsp_70_fam"/>
</dbReference>
<dbReference type="InterPro" id="IPR010236">
    <property type="entry name" value="ISC_FeS_clus_asmbl_HscA"/>
</dbReference>
<dbReference type="NCBIfam" id="TIGR01991">
    <property type="entry name" value="HscA"/>
    <property type="match status" value="1"/>
</dbReference>
<dbReference type="NCBIfam" id="NF003520">
    <property type="entry name" value="PRK05183.1"/>
    <property type="match status" value="1"/>
</dbReference>
<dbReference type="PANTHER" id="PTHR19375">
    <property type="entry name" value="HEAT SHOCK PROTEIN 70KDA"/>
    <property type="match status" value="1"/>
</dbReference>
<dbReference type="Pfam" id="PF00012">
    <property type="entry name" value="HSP70"/>
    <property type="match status" value="1"/>
</dbReference>
<dbReference type="PRINTS" id="PR00301">
    <property type="entry name" value="HEATSHOCK70"/>
</dbReference>
<dbReference type="SUPFAM" id="SSF53067">
    <property type="entry name" value="Actin-like ATPase domain"/>
    <property type="match status" value="2"/>
</dbReference>
<dbReference type="SUPFAM" id="SSF100934">
    <property type="entry name" value="Heat shock protein 70kD (HSP70), C-terminal subdomain"/>
    <property type="match status" value="1"/>
</dbReference>
<dbReference type="SUPFAM" id="SSF100920">
    <property type="entry name" value="Heat shock protein 70kD (HSP70), peptide-binding domain"/>
    <property type="match status" value="1"/>
</dbReference>
<dbReference type="PROSITE" id="PS00297">
    <property type="entry name" value="HSP70_1"/>
    <property type="match status" value="1"/>
</dbReference>
<dbReference type="PROSITE" id="PS00329">
    <property type="entry name" value="HSP70_2"/>
    <property type="match status" value="1"/>
</dbReference>
<dbReference type="PROSITE" id="PS01036">
    <property type="entry name" value="HSP70_3"/>
    <property type="match status" value="1"/>
</dbReference>
<protein>
    <recommendedName>
        <fullName evidence="1">Chaperone protein HscA homolog</fullName>
    </recommendedName>
</protein>
<sequence>MALLQIAEPGLMAAPHQHKLAVGIDLGTTNSLVATVRSAHTEILLDEKDRPLVPSIVHFGDNNEITVGYEAGELASIDPQNTVISVKRLIGRSLEDVQARYPNLPYRFEASENGLPLISTRKSAVSPVEVSSEILKKLTALAKRRLGGELQGAVITVPAYFDDAQRQSTKDAAKLAGLNVLRLLNEPTAAAIAYGLDSGKEGVIAVYDLGGGTFDISILRLSKGVFEVLATGGDTALGGDDFDHLVADWITEQSGISPQDDKQKRQLVELATRLKIQLTDNETVAIQYQNWHGKISRNQFNQLIQPLVKRSLISCRRALKDANVTADEVNEVVMVGGSTRVPFVREQVGEFFKRQPLTSIDPDKVVALGAAVQADILVGNKPDSEMLLLDVIPLSLGIETMGGLVEKIIPRNTTIPVARAQEFTTFKDGQTAMTVHIVQGEREMVADCRSLARFTLRGIPPMAAGAAQVRVTYQVDADGLLNVTAMEKSTGVQSSIQVKPSYGLTDDEITQMLKASMDNAKQDIDARLLAEQRVEAKRVIESVLSALSHDRDLLNDEELSAIKKALVELDKLQQQNDTLAIKQGIKDLDAATQEFAARRMDKSIRSALTGHSVEDI</sequence>
<gene>
    <name evidence="1" type="primary">hscA</name>
    <name type="ordered locus">MS1721</name>
</gene>
<comment type="function">
    <text evidence="1">Chaperone involved in the maturation of iron-sulfur cluster-containing proteins. Has a low intrinsic ATPase activity which is markedly stimulated by HscB.</text>
</comment>
<comment type="similarity">
    <text evidence="1">Belongs to the heat shock protein 70 family.</text>
</comment>
<name>HSCA_MANSM</name>
<reference key="1">
    <citation type="journal article" date="2004" name="Nat. Biotechnol.">
        <title>The genome sequence of the capnophilic rumen bacterium Mannheimia succiniciproducens.</title>
        <authorList>
            <person name="Hong S.H."/>
            <person name="Kim J.S."/>
            <person name="Lee S.Y."/>
            <person name="In Y.H."/>
            <person name="Choi S.S."/>
            <person name="Rih J.-K."/>
            <person name="Kim C.H."/>
            <person name="Jeong H."/>
            <person name="Hur C.G."/>
            <person name="Kim J.J."/>
        </authorList>
    </citation>
    <scope>NUCLEOTIDE SEQUENCE [LARGE SCALE GENOMIC DNA]</scope>
    <source>
        <strain>KCTC 0769BP / MBEL55E</strain>
    </source>
</reference>
<evidence type="ECO:0000255" key="1">
    <source>
        <dbReference type="HAMAP-Rule" id="MF_00679"/>
    </source>
</evidence>